<name>VTH2_YEAS8</name>
<proteinExistence type="inferred from homology"/>
<accession>C8ZAZ9</accession>
<comment type="function">
    <text evidence="1">Functions as a sorting receptor in the Golgi compartment required for the intracellular sorting and delivery of soluble vacuolar proteins, like carboxypeptidase Y (CPY) and proteinase A.</text>
</comment>
<comment type="subcellular location">
    <subcellularLocation>
        <location evidence="1">Golgi apparatus</location>
        <location evidence="1">trans-Golgi network membrane</location>
        <topology evidence="1">Single-pass type I membrane protein</topology>
    </subcellularLocation>
</comment>
<comment type="miscellaneous">
    <text>Present with 319 molecules/cell in log phase SD medium.</text>
</comment>
<comment type="similarity">
    <text evidence="3">Belongs to the VPS10-related sortilin family.</text>
</comment>
<feature type="signal peptide" evidence="2">
    <location>
        <begin position="1"/>
        <end position="21"/>
    </location>
</feature>
<feature type="chain" id="PRO_0000407549" description="VPS10 homolog 2">
    <location>
        <begin position="22"/>
        <end position="1495"/>
    </location>
</feature>
<feature type="topological domain" description="Lumenal" evidence="2">
    <location>
        <begin position="23"/>
        <end position="1369"/>
    </location>
</feature>
<feature type="transmembrane region" description="Helical" evidence="2">
    <location>
        <begin position="1370"/>
        <end position="1390"/>
    </location>
</feature>
<feature type="topological domain" description="Cytoplasmic" evidence="2">
    <location>
        <begin position="1391"/>
        <end position="1495"/>
    </location>
</feature>
<feature type="repeat" description="BNR 1">
    <location>
        <begin position="58"/>
        <end position="67"/>
    </location>
</feature>
<feature type="repeat" description="BNR 2">
    <location>
        <begin position="101"/>
        <end position="111"/>
    </location>
</feature>
<feature type="repeat" description="BNR 3">
    <location>
        <begin position="229"/>
        <end position="238"/>
    </location>
</feature>
<feature type="repeat" description="BNR 4">
    <location>
        <begin position="394"/>
        <end position="403"/>
    </location>
</feature>
<feature type="repeat" description="BNR 5">
    <location>
        <begin position="465"/>
        <end position="475"/>
    </location>
</feature>
<feature type="repeat" description="BNR 6">
    <location>
        <begin position="511"/>
        <end position="520"/>
    </location>
</feature>
<feature type="repeat" description="BNR 7">
    <location>
        <begin position="740"/>
        <end position="750"/>
    </location>
</feature>
<feature type="repeat" description="BNR 8">
    <location>
        <begin position="837"/>
        <end position="847"/>
    </location>
</feature>
<feature type="repeat" description="BNR 9">
    <location>
        <begin position="1119"/>
        <end position="1129"/>
    </location>
</feature>
<feature type="repeat" description="BNR 10">
    <location>
        <begin position="1161"/>
        <end position="1170"/>
    </location>
</feature>
<feature type="glycosylation site" description="N-linked (GlcNAc...) asparagine" evidence="2">
    <location>
        <position position="148"/>
    </location>
</feature>
<feature type="glycosylation site" description="N-linked (GlcNAc...) asparagine" evidence="2">
    <location>
        <position position="479"/>
    </location>
</feature>
<feature type="glycosylation site" description="N-linked (GlcNAc...) asparagine" evidence="2">
    <location>
        <position position="769"/>
    </location>
</feature>
<feature type="glycosylation site" description="N-linked (GlcNAc...) asparagine" evidence="2">
    <location>
        <position position="986"/>
    </location>
</feature>
<feature type="glycosylation site" description="N-linked (GlcNAc...) asparagine" evidence="2">
    <location>
        <position position="1279"/>
    </location>
</feature>
<dbReference type="EMBL" id="FN393075">
    <property type="protein sequence ID" value="CAY80565.2"/>
    <property type="molecule type" value="Genomic_DNA"/>
</dbReference>
<dbReference type="SMR" id="C8ZAZ9"/>
<dbReference type="GlyCosmos" id="C8ZAZ9">
    <property type="glycosylation" value="5 sites, No reported glycans"/>
</dbReference>
<dbReference type="HOGENOM" id="CLU_000700_0_0_1"/>
<dbReference type="OrthoDB" id="9248at4893"/>
<dbReference type="Proteomes" id="UP000000286">
    <property type="component" value="Chromosome X, Scaffold EC1118_1J11"/>
</dbReference>
<dbReference type="GO" id="GO:0005829">
    <property type="term" value="C:cytosol"/>
    <property type="evidence" value="ECO:0007669"/>
    <property type="project" value="GOC"/>
</dbReference>
<dbReference type="GO" id="GO:0005794">
    <property type="term" value="C:Golgi apparatus"/>
    <property type="evidence" value="ECO:0007669"/>
    <property type="project" value="UniProtKB-SubCell"/>
</dbReference>
<dbReference type="GO" id="GO:0016020">
    <property type="term" value="C:membrane"/>
    <property type="evidence" value="ECO:0007669"/>
    <property type="project" value="UniProtKB-KW"/>
</dbReference>
<dbReference type="GO" id="GO:0006895">
    <property type="term" value="P:Golgi to endosome transport"/>
    <property type="evidence" value="ECO:0007669"/>
    <property type="project" value="TreeGrafter"/>
</dbReference>
<dbReference type="GO" id="GO:0006896">
    <property type="term" value="P:Golgi to vacuole transport"/>
    <property type="evidence" value="ECO:0007669"/>
    <property type="project" value="TreeGrafter"/>
</dbReference>
<dbReference type="GO" id="GO:0006623">
    <property type="term" value="P:protein targeting to vacuole"/>
    <property type="evidence" value="ECO:0007669"/>
    <property type="project" value="TreeGrafter"/>
</dbReference>
<dbReference type="CDD" id="cd15482">
    <property type="entry name" value="Sialidase_non-viral"/>
    <property type="match status" value="2"/>
</dbReference>
<dbReference type="FunFam" id="3.30.60.270:FF:000005">
    <property type="entry name" value="Sortilin"/>
    <property type="match status" value="1"/>
</dbReference>
<dbReference type="FunFam" id="3.30.60.270:FF:000008">
    <property type="entry name" value="Vacuolar protein sorting/targeting protein PEP1"/>
    <property type="match status" value="1"/>
</dbReference>
<dbReference type="FunFam" id="2.130.10.10:FF:000998">
    <property type="entry name" value="VPS10 homolog 2"/>
    <property type="match status" value="1"/>
</dbReference>
<dbReference type="Gene3D" id="2.10.70.80">
    <property type="match status" value="1"/>
</dbReference>
<dbReference type="Gene3D" id="2.120.10.10">
    <property type="match status" value="1"/>
</dbReference>
<dbReference type="Gene3D" id="3.30.60.270">
    <property type="match status" value="2"/>
</dbReference>
<dbReference type="Gene3D" id="2.130.10.10">
    <property type="entry name" value="YVTN repeat-like/Quinoprotein amine dehydrogenase"/>
    <property type="match status" value="2"/>
</dbReference>
<dbReference type="InterPro" id="IPR036278">
    <property type="entry name" value="Sialidase_sf"/>
</dbReference>
<dbReference type="InterPro" id="IPR031777">
    <property type="entry name" value="Sortilin_C"/>
</dbReference>
<dbReference type="InterPro" id="IPR031778">
    <property type="entry name" value="Sortilin_N"/>
</dbReference>
<dbReference type="InterPro" id="IPR006581">
    <property type="entry name" value="VPS10"/>
</dbReference>
<dbReference type="InterPro" id="IPR050310">
    <property type="entry name" value="VPS10-sortilin"/>
</dbReference>
<dbReference type="InterPro" id="IPR015943">
    <property type="entry name" value="WD40/YVTN_repeat-like_dom_sf"/>
</dbReference>
<dbReference type="PANTHER" id="PTHR12106">
    <property type="entry name" value="SORTILIN RELATED"/>
    <property type="match status" value="1"/>
</dbReference>
<dbReference type="PANTHER" id="PTHR12106:SF27">
    <property type="entry name" value="SORTILIN-RELATED RECEPTOR"/>
    <property type="match status" value="1"/>
</dbReference>
<dbReference type="Pfam" id="PF15902">
    <property type="entry name" value="Sortilin-Vps10"/>
    <property type="match status" value="2"/>
</dbReference>
<dbReference type="Pfam" id="PF15901">
    <property type="entry name" value="Sortilin_C"/>
    <property type="match status" value="2"/>
</dbReference>
<dbReference type="SMART" id="SM00602">
    <property type="entry name" value="VPS10"/>
    <property type="match status" value="2"/>
</dbReference>
<dbReference type="SUPFAM" id="SSF110296">
    <property type="entry name" value="Oligoxyloglucan reducing end-specific cellobiohydrolase"/>
    <property type="match status" value="1"/>
</dbReference>
<dbReference type="SUPFAM" id="SSF50939">
    <property type="entry name" value="Sialidases"/>
    <property type="match status" value="2"/>
</dbReference>
<evidence type="ECO:0000250" key="1"/>
<evidence type="ECO:0000255" key="2"/>
<evidence type="ECO:0000305" key="3"/>
<reference key="1">
    <citation type="journal article" date="2009" name="Proc. Natl. Acad. Sci. U.S.A.">
        <title>Eukaryote-to-eukaryote gene transfer events revealed by the genome sequence of the wine yeast Saccharomyces cerevisiae EC1118.</title>
        <authorList>
            <person name="Novo M."/>
            <person name="Bigey F."/>
            <person name="Beyne E."/>
            <person name="Galeote V."/>
            <person name="Gavory F."/>
            <person name="Mallet S."/>
            <person name="Cambon B."/>
            <person name="Legras J.-L."/>
            <person name="Wincker P."/>
            <person name="Casaregola S."/>
            <person name="Dequin S."/>
        </authorList>
    </citation>
    <scope>NUCLEOTIDE SEQUENCE [LARGE SCALE GENOMIC DNA]</scope>
    <source>
        <strain>Lalvin EC1118 / Prise de mousse</strain>
    </source>
</reference>
<protein>
    <recommendedName>
        <fullName>VPS10 homolog 2</fullName>
    </recommendedName>
    <alternativeName>
        <fullName>Sortilin VTH2</fullName>
    </alternativeName>
</protein>
<sequence length="1495" mass="168533">MALFRALYIIWVFLLIPLFNAEEFTPKVTRTLSRYVFDIVNFDDSNTLIRADEDSVEISFDAGENWKTIDGIEEPIESFVVDPFRGHDRAFAFVKTAPKFYVTDDQGKSWRPLTIPISEKASNYFCGITTHPIKKKHLIIRCDLLTINDSGVMHVGREIYTTNDGVSFSQVKPSFGKIDGHISTARCDFIKSSEDSDLGGNDASILCLFRNTEYIESTGSTIDKSELILSADGGETFKELVQFKDKVVRRYEILKYHVVVLTQDDMYNEMSSMDIWISNDVCTFQIAHTPTKIRHVNMGQIHEDSIGRIVLSVSRERDDEDSNQPGAAEVLISDSEGLKFLPIKWIPNNQFGYINVAYPGFLKGTFFGSFHPFIEYSDRKRKYSRQKVREETKVSVDNGLTWSNLKVVDRENVDSFGCDVTKPERCSLHTYFYDLRNLRPSAGIMMISGIVGDGSVYDWNEEKTFISRDSGLTWRLVHNSTGLYTTGDLGNIIMYIPYRSNENGDVPSKFYYSLDQGKTWGEYDLIMPIYPYRLISTISDGSGSKFILTGTSITDDPISITYSIDFSAVFDYKSCEEGDFEDWNLADGKCVNGAKYKYRRRKQDAQCLVKKAFKDLSLDETPCNSCTGSDYECSFEFVRDAKGDCIPDYNLIALSDICDKSKDKSVLVEPLQLIKGDKCKTPMKIEPVDIPCDEIPEEGSSDKEIVTTENKFDFEIKFYQYFDTVADESLVMLNSIGDAYISHDGGQTIKRFDTDGEKIVEVVFNPYFNSSAYLFGSKGNIFLTHDRGYSFMIAKLPEARQLGMPLDFSAKAQDTFIYYGGKNCESILSPECHAVAYLTKDGGETFTEMLDNAIHCEFAGTLFKYPSNDDMVMCQVKEKFSQTRSLVSSTDFFQDDKKTVFENIIGYLSTGGYIIVAVPHENNELRAYVTNDGAEFAEAKFPYDEDIGKQDAFTILGSEEGSIFLHLATNLESGHDFGNLLKSNSNGTSFVTLEHAVNRNTFGYVDFEKVQGLEGIIITNIVSNSEKVGEHKGDEQLKTKITFNDGSDWNFLKPPKKDSEGKKFLCDSVSLDKCSLHLHGYTERKDIRDTYSSGSALGMMFGVGNVGDRLLPYEECSTFLTTDGGETWTEVKKGPHQWEYGDHGGVLVLVPENAETDSISYSTDFGKTWKDYKFCGDKVLVKDVITVPRDSALRFLLFGEAKNMGSGSFRTYTIDFRNIFERQCEFDITGKKRADFKYSPLGSRTDCLFGHKTEFLRKTDEKCFIGNIPLSEFSRNVKNCSCTRQDFECDYNFYKASDGTCKLVKGLSSANGADICKKEPDLIEYYDSSGYRKIPLSTCKGGLKLDAHLAPHPCPGKEKAFREKYPINTGAYALVFVTILLVIFFAAWFVYDRGIRRNGGFSRFEEIRLGDDGLIENNRTDRVVNIIVRLGLCISLITKSAFQRAKAGTAQLSSKFRARFGNKKGATYSSLLHDQLSDAFQRAKAGTAQLSCFKI</sequence>
<organism>
    <name type="scientific">Saccharomyces cerevisiae (strain Lalvin EC1118 / Prise de mousse)</name>
    <name type="common">Baker's yeast</name>
    <dbReference type="NCBI Taxonomy" id="643680"/>
    <lineage>
        <taxon>Eukaryota</taxon>
        <taxon>Fungi</taxon>
        <taxon>Dikarya</taxon>
        <taxon>Ascomycota</taxon>
        <taxon>Saccharomycotina</taxon>
        <taxon>Saccharomycetes</taxon>
        <taxon>Saccharomycetales</taxon>
        <taxon>Saccharomycetaceae</taxon>
        <taxon>Saccharomyces</taxon>
    </lineage>
</organism>
<keyword id="KW-0325">Glycoprotein</keyword>
<keyword id="KW-0333">Golgi apparatus</keyword>
<keyword id="KW-0472">Membrane</keyword>
<keyword id="KW-0653">Protein transport</keyword>
<keyword id="KW-0675">Receptor</keyword>
<keyword id="KW-0677">Repeat</keyword>
<keyword id="KW-0732">Signal</keyword>
<keyword id="KW-0812">Transmembrane</keyword>
<keyword id="KW-1133">Transmembrane helix</keyword>
<keyword id="KW-0813">Transport</keyword>
<gene>
    <name type="primary">VTH2</name>
    <name type="ORF">EC1118_1J11_0078g</name>
</gene>